<feature type="chain" id="PRO_1000184395" description="ATP synthase subunit c">
    <location>
        <begin position="1"/>
        <end position="105"/>
    </location>
</feature>
<feature type="transmembrane region" description="Helical" evidence="1">
    <location>
        <begin position="3"/>
        <end position="23"/>
    </location>
</feature>
<feature type="transmembrane region" description="Helical" evidence="1">
    <location>
        <begin position="32"/>
        <end position="52"/>
    </location>
</feature>
<feature type="transmembrane region" description="Helical" evidence="1">
    <location>
        <begin position="78"/>
        <end position="98"/>
    </location>
</feature>
<feature type="site" description="Reversibly protonated during proton transport" evidence="1">
    <location>
        <position position="84"/>
    </location>
</feature>
<accession>Q1CS52</accession>
<proteinExistence type="inferred from homology"/>
<dbReference type="EMBL" id="CP000241">
    <property type="protein sequence ID" value="ABF85220.1"/>
    <property type="molecule type" value="Genomic_DNA"/>
</dbReference>
<dbReference type="RefSeq" id="WP_000669961.1">
    <property type="nucleotide sequence ID" value="NC_008086.1"/>
</dbReference>
<dbReference type="SMR" id="Q1CS52"/>
<dbReference type="KEGG" id="hpa:HPAG1_1153"/>
<dbReference type="HOGENOM" id="CLU_148047_0_1_7"/>
<dbReference type="GO" id="GO:0005886">
    <property type="term" value="C:plasma membrane"/>
    <property type="evidence" value="ECO:0007669"/>
    <property type="project" value="UniProtKB-SubCell"/>
</dbReference>
<dbReference type="GO" id="GO:0045259">
    <property type="term" value="C:proton-transporting ATP synthase complex"/>
    <property type="evidence" value="ECO:0007669"/>
    <property type="project" value="UniProtKB-KW"/>
</dbReference>
<dbReference type="GO" id="GO:0033177">
    <property type="term" value="C:proton-transporting two-sector ATPase complex, proton-transporting domain"/>
    <property type="evidence" value="ECO:0007669"/>
    <property type="project" value="InterPro"/>
</dbReference>
<dbReference type="GO" id="GO:0008289">
    <property type="term" value="F:lipid binding"/>
    <property type="evidence" value="ECO:0007669"/>
    <property type="project" value="UniProtKB-KW"/>
</dbReference>
<dbReference type="GO" id="GO:0046933">
    <property type="term" value="F:proton-transporting ATP synthase activity, rotational mechanism"/>
    <property type="evidence" value="ECO:0007669"/>
    <property type="project" value="UniProtKB-UniRule"/>
</dbReference>
<dbReference type="CDD" id="cd18121">
    <property type="entry name" value="ATP-synt_Fo_c"/>
    <property type="match status" value="1"/>
</dbReference>
<dbReference type="Gene3D" id="1.20.20.10">
    <property type="entry name" value="F1F0 ATP synthase subunit C"/>
    <property type="match status" value="1"/>
</dbReference>
<dbReference type="HAMAP" id="MF_01396">
    <property type="entry name" value="ATP_synth_c_bact"/>
    <property type="match status" value="1"/>
</dbReference>
<dbReference type="InterPro" id="IPR000454">
    <property type="entry name" value="ATP_synth_F0_csu"/>
</dbReference>
<dbReference type="InterPro" id="IPR020537">
    <property type="entry name" value="ATP_synth_F0_csu_DDCD_BS"/>
</dbReference>
<dbReference type="InterPro" id="IPR038662">
    <property type="entry name" value="ATP_synth_F0_csu_sf"/>
</dbReference>
<dbReference type="InterPro" id="IPR002379">
    <property type="entry name" value="ATPase_proteolipid_c-like_dom"/>
</dbReference>
<dbReference type="InterPro" id="IPR035921">
    <property type="entry name" value="F/V-ATP_Csub_sf"/>
</dbReference>
<dbReference type="NCBIfam" id="NF006295">
    <property type="entry name" value="PRK08482.1"/>
    <property type="match status" value="1"/>
</dbReference>
<dbReference type="Pfam" id="PF00137">
    <property type="entry name" value="ATP-synt_C"/>
    <property type="match status" value="1"/>
</dbReference>
<dbReference type="PRINTS" id="PR00124">
    <property type="entry name" value="ATPASEC"/>
</dbReference>
<dbReference type="SUPFAM" id="SSF81333">
    <property type="entry name" value="F1F0 ATP synthase subunit C"/>
    <property type="match status" value="1"/>
</dbReference>
<dbReference type="PROSITE" id="PS00605">
    <property type="entry name" value="ATPASE_C"/>
    <property type="match status" value="1"/>
</dbReference>
<reference key="1">
    <citation type="journal article" date="2006" name="Proc. Natl. Acad. Sci. U.S.A.">
        <title>The complete genome sequence of a chronic atrophic gastritis Helicobacter pylori strain: evolution during disease progression.</title>
        <authorList>
            <person name="Oh J.D."/>
            <person name="Kling-Baeckhed H."/>
            <person name="Giannakis M."/>
            <person name="Xu J."/>
            <person name="Fulton R.S."/>
            <person name="Fulton L.A."/>
            <person name="Cordum H.S."/>
            <person name="Wang C."/>
            <person name="Elliott G."/>
            <person name="Edwards J."/>
            <person name="Mardis E.R."/>
            <person name="Engstrand L.G."/>
            <person name="Gordon J.I."/>
        </authorList>
    </citation>
    <scope>NUCLEOTIDE SEQUENCE [LARGE SCALE GENOMIC DNA]</scope>
    <source>
        <strain>HPAG1</strain>
    </source>
</reference>
<keyword id="KW-0066">ATP synthesis</keyword>
<keyword id="KW-0997">Cell inner membrane</keyword>
<keyword id="KW-1003">Cell membrane</keyword>
<keyword id="KW-0138">CF(0)</keyword>
<keyword id="KW-0375">Hydrogen ion transport</keyword>
<keyword id="KW-0406">Ion transport</keyword>
<keyword id="KW-0446">Lipid-binding</keyword>
<keyword id="KW-0472">Membrane</keyword>
<keyword id="KW-0812">Transmembrane</keyword>
<keyword id="KW-1133">Transmembrane helix</keyword>
<keyword id="KW-0813">Transport</keyword>
<gene>
    <name evidence="1" type="primary">atpE</name>
    <name type="ordered locus">HPAG1_1153</name>
</gene>
<name>ATPL_HELPH</name>
<sequence>MKFLALFFLALAGVAFAHDGGMGGMDMIKSYSILGAMIGLGIAAFGGAIGMGNAAAATITGTARNPGVGGKLLTTMFVAMAMIEAQVIYTLVFAIIAIYSNPFLS</sequence>
<protein>
    <recommendedName>
        <fullName evidence="1">ATP synthase subunit c</fullName>
    </recommendedName>
    <alternativeName>
        <fullName evidence="1">ATP synthase F(0) sector subunit c</fullName>
    </alternativeName>
    <alternativeName>
        <fullName evidence="1">F-type ATPase subunit c</fullName>
        <shortName evidence="1">F-ATPase subunit c</shortName>
    </alternativeName>
    <alternativeName>
        <fullName evidence="1">Lipid-binding protein</fullName>
    </alternativeName>
</protein>
<comment type="function">
    <text evidence="1">F(1)F(0) ATP synthase produces ATP from ADP in the presence of a proton or sodium gradient. F-type ATPases consist of two structural domains, F(1) containing the extramembraneous catalytic core and F(0) containing the membrane proton channel, linked together by a central stalk and a peripheral stalk. During catalysis, ATP synthesis in the catalytic domain of F(1) is coupled via a rotary mechanism of the central stalk subunits to proton translocation.</text>
</comment>
<comment type="function">
    <text evidence="1">Key component of the F(0) channel; it plays a direct role in translocation across the membrane. A homomeric c-ring of between 10-14 subunits forms the central stalk rotor element with the F(1) delta and epsilon subunits.</text>
</comment>
<comment type="subunit">
    <text evidence="1">F-type ATPases have 2 components, F(1) - the catalytic core - and F(0) - the membrane proton channel. F(1) has five subunits: alpha(3), beta(3), gamma(1), delta(1), epsilon(1). F(0) has three main subunits: a(1), b(2) and c(10-14). The alpha and beta chains form an alternating ring which encloses part of the gamma chain. F(1) is attached to F(0) by a central stalk formed by the gamma and epsilon chains, while a peripheral stalk is formed by the delta and b chains.</text>
</comment>
<comment type="subcellular location">
    <subcellularLocation>
        <location evidence="1">Cell inner membrane</location>
        <topology evidence="1">Multi-pass membrane protein</topology>
    </subcellularLocation>
</comment>
<comment type="similarity">
    <text evidence="1">Belongs to the ATPase C chain family.</text>
</comment>
<evidence type="ECO:0000255" key="1">
    <source>
        <dbReference type="HAMAP-Rule" id="MF_01396"/>
    </source>
</evidence>
<organism>
    <name type="scientific">Helicobacter pylori (strain HPAG1)</name>
    <dbReference type="NCBI Taxonomy" id="357544"/>
    <lineage>
        <taxon>Bacteria</taxon>
        <taxon>Pseudomonadati</taxon>
        <taxon>Campylobacterota</taxon>
        <taxon>Epsilonproteobacteria</taxon>
        <taxon>Campylobacterales</taxon>
        <taxon>Helicobacteraceae</taxon>
        <taxon>Helicobacter</taxon>
    </lineage>
</organism>